<gene>
    <name type="primary">GOLS1</name>
    <name type="ordered locus">At2g47180</name>
    <name type="ORF">T3D7</name>
    <name type="ORF">T8I13</name>
</gene>
<comment type="function">
    <text evidence="3 4">Galactinol synthase involved in the biosynthesis of raffinose family oligosaccharides (RFOs) that function as osmoprotectants. Promotes plant stress tolerance such as heat, chilling, salinity and methylviologen (MV), a superoxide radical generating drug, by mediating raffinose accumulation, an osmoprotective substance.</text>
</comment>
<comment type="catalytic activity">
    <reaction evidence="2">
        <text>myo-inositol + UDP-alpha-D-galactose = alpha-D-galactosyl-(1-&gt;3)-1D-myo-inositol + UDP + H(+)</text>
        <dbReference type="Rhea" id="RHEA:12464"/>
        <dbReference type="ChEBI" id="CHEBI:15378"/>
        <dbReference type="ChEBI" id="CHEBI:17268"/>
        <dbReference type="ChEBI" id="CHEBI:17505"/>
        <dbReference type="ChEBI" id="CHEBI:58223"/>
        <dbReference type="ChEBI" id="CHEBI:66914"/>
        <dbReference type="EC" id="2.4.1.123"/>
    </reaction>
</comment>
<comment type="cofactor">
    <cofactor evidence="1">
        <name>a divalent metal cation</name>
        <dbReference type="ChEBI" id="CHEBI:60240"/>
    </cofactor>
</comment>
<comment type="subcellular location">
    <subcellularLocation>
        <location evidence="5">Cytoplasm</location>
    </subcellularLocation>
</comment>
<comment type="tissue specificity">
    <text evidence="2 3">Accumulates in mature seeds. Expressed in seedlings (axes and cotyledons), meristems, vascular tissues and emerging lateral roots. Present in abscission zones.</text>
</comment>
<comment type="induction">
    <text evidence="2 3 4">Induced by abscisic acid (ABA), heat, drought and high-salinity stresses. Promoted by methylviologen (MV), a superoxide radical generating drug.</text>
</comment>
<comment type="disruption phenotype">
    <text evidence="3">Impaired raffinose accumulation in response to heat stress.</text>
</comment>
<comment type="similarity">
    <text evidence="5">Belongs to the glycosyltransferase 8 family. Galactosyltransferase subfamily.</text>
</comment>
<accession>O22893</accession>
<reference key="1">
    <citation type="journal article" date="2002" name="Plant J.">
        <title>Important roles of drought- and cold-inducible genes for galactinol synthase in stress tolerance in Arabidopsis thaliana.</title>
        <authorList>
            <person name="Taji T."/>
            <person name="Ohsumi C."/>
            <person name="Iuchi S."/>
            <person name="Seki M."/>
            <person name="Kasuga M."/>
            <person name="Kobayashi M."/>
            <person name="Yamaguchi-Shinozaki K."/>
            <person name="Shinozaki K."/>
        </authorList>
    </citation>
    <scope>NUCLEOTIDE SEQUENCE [MRNA]</scope>
    <scope>INDUCTION BY DROUGHT; ABA AND HIGH-SALINITY STRESSES</scope>
    <scope>CATALYTIC ACTIVITY</scope>
    <scope>TISSUE SPECIFICITY</scope>
    <scope>GENE FAMILY</scope>
</reference>
<reference key="2">
    <citation type="journal article" date="1999" name="Nature">
        <title>Sequence and analysis of chromosome 2 of the plant Arabidopsis thaliana.</title>
        <authorList>
            <person name="Lin X."/>
            <person name="Kaul S."/>
            <person name="Rounsley S.D."/>
            <person name="Shea T.P."/>
            <person name="Benito M.-I."/>
            <person name="Town C.D."/>
            <person name="Fujii C.Y."/>
            <person name="Mason T.M."/>
            <person name="Bowman C.L."/>
            <person name="Barnstead M.E."/>
            <person name="Feldblyum T.V."/>
            <person name="Buell C.R."/>
            <person name="Ketchum K.A."/>
            <person name="Lee J.J."/>
            <person name="Ronning C.M."/>
            <person name="Koo H.L."/>
            <person name="Moffat K.S."/>
            <person name="Cronin L.A."/>
            <person name="Shen M."/>
            <person name="Pai G."/>
            <person name="Van Aken S."/>
            <person name="Umayam L."/>
            <person name="Tallon L.J."/>
            <person name="Gill J.E."/>
            <person name="Adams M.D."/>
            <person name="Carrera A.J."/>
            <person name="Creasy T.H."/>
            <person name="Goodman H.M."/>
            <person name="Somerville C.R."/>
            <person name="Copenhaver G.P."/>
            <person name="Preuss D."/>
            <person name="Nierman W.C."/>
            <person name="White O."/>
            <person name="Eisen J.A."/>
            <person name="Salzberg S.L."/>
            <person name="Fraser C.M."/>
            <person name="Venter J.C."/>
        </authorList>
    </citation>
    <scope>NUCLEOTIDE SEQUENCE [LARGE SCALE GENOMIC DNA]</scope>
    <source>
        <strain>cv. Columbia</strain>
    </source>
</reference>
<reference key="3">
    <citation type="journal article" date="2017" name="Plant J.">
        <title>Araport11: a complete reannotation of the Arabidopsis thaliana reference genome.</title>
        <authorList>
            <person name="Cheng C.Y."/>
            <person name="Krishnakumar V."/>
            <person name="Chan A.P."/>
            <person name="Thibaud-Nissen F."/>
            <person name="Schobel S."/>
            <person name="Town C.D."/>
        </authorList>
    </citation>
    <scope>GENOME REANNOTATION</scope>
    <source>
        <strain>cv. Columbia</strain>
    </source>
</reference>
<reference key="4">
    <citation type="journal article" date="2003" name="Science">
        <title>Empirical analysis of transcriptional activity in the Arabidopsis genome.</title>
        <authorList>
            <person name="Yamada K."/>
            <person name="Lim J."/>
            <person name="Dale J.M."/>
            <person name="Chen H."/>
            <person name="Shinn P."/>
            <person name="Palm C.J."/>
            <person name="Southwick A.M."/>
            <person name="Wu H.C."/>
            <person name="Kim C.J."/>
            <person name="Nguyen M."/>
            <person name="Pham P.K."/>
            <person name="Cheuk R.F."/>
            <person name="Karlin-Newmann G."/>
            <person name="Liu S.X."/>
            <person name="Lam B."/>
            <person name="Sakano H."/>
            <person name="Wu T."/>
            <person name="Yu G."/>
            <person name="Miranda M."/>
            <person name="Quach H.L."/>
            <person name="Tripp M."/>
            <person name="Chang C.H."/>
            <person name="Lee J.M."/>
            <person name="Toriumi M.J."/>
            <person name="Chan M.M."/>
            <person name="Tang C.C."/>
            <person name="Onodera C.S."/>
            <person name="Deng J.M."/>
            <person name="Akiyama K."/>
            <person name="Ansari Y."/>
            <person name="Arakawa T."/>
            <person name="Banh J."/>
            <person name="Banno F."/>
            <person name="Bowser L."/>
            <person name="Brooks S.Y."/>
            <person name="Carninci P."/>
            <person name="Chao Q."/>
            <person name="Choy N."/>
            <person name="Enju A."/>
            <person name="Goldsmith A.D."/>
            <person name="Gurjal M."/>
            <person name="Hansen N.F."/>
            <person name="Hayashizaki Y."/>
            <person name="Johnson-Hopson C."/>
            <person name="Hsuan V.W."/>
            <person name="Iida K."/>
            <person name="Karnes M."/>
            <person name="Khan S."/>
            <person name="Koesema E."/>
            <person name="Ishida J."/>
            <person name="Jiang P.X."/>
            <person name="Jones T."/>
            <person name="Kawai J."/>
            <person name="Kamiya A."/>
            <person name="Meyers C."/>
            <person name="Nakajima M."/>
            <person name="Narusaka M."/>
            <person name="Seki M."/>
            <person name="Sakurai T."/>
            <person name="Satou M."/>
            <person name="Tamse R."/>
            <person name="Vaysberg M."/>
            <person name="Wallender E.K."/>
            <person name="Wong C."/>
            <person name="Yamamura Y."/>
            <person name="Yuan S."/>
            <person name="Shinozaki K."/>
            <person name="Davis R.W."/>
            <person name="Theologis A."/>
            <person name="Ecker J.R."/>
        </authorList>
    </citation>
    <scope>NUCLEOTIDE SEQUENCE [LARGE SCALE MRNA]</scope>
    <source>
        <strain>cv. Columbia</strain>
    </source>
</reference>
<reference key="5">
    <citation type="submission" date="2002-03" db="EMBL/GenBank/DDBJ databases">
        <title>Full-length cDNA from Arabidopsis thaliana.</title>
        <authorList>
            <person name="Brover V.V."/>
            <person name="Troukhan M.E."/>
            <person name="Alexandrov N.A."/>
            <person name="Lu Y.-P."/>
            <person name="Flavell R.B."/>
            <person name="Feldmann K.A."/>
        </authorList>
    </citation>
    <scope>NUCLEOTIDE SEQUENCE [LARGE SCALE MRNA]</scope>
</reference>
<reference key="6">
    <citation type="journal article" date="2004" name="Plant Physiol.">
        <title>Galactinol synthase1. A novel heat shock factor target gene responsible for heat-induced synthesis of raffinose family oligosaccharides in Arabidopsis.</title>
        <authorList>
            <person name="Panikulangara T.J."/>
            <person name="Eggers-Schumacher G."/>
            <person name="Wunderlich M."/>
            <person name="Stransky H."/>
            <person name="Schoeffl F."/>
        </authorList>
    </citation>
    <scope>FUNCTION</scope>
    <scope>DISRUPTION PHENOTYPE</scope>
    <scope>INDUCTION BY HEAT</scope>
    <scope>TISSUE SPECIFICITY</scope>
    <source>
        <strain>cv. C24</strain>
        <strain>cv. Columbia</strain>
        <strain>cv. Wassilewskija</strain>
    </source>
</reference>
<reference key="7">
    <citation type="journal article" date="2008" name="Plant Physiol.">
        <title>Galactinol and raffinose constitute a novel function to protect plants from oxidative damage.</title>
        <authorList>
            <person name="Nishizawa A."/>
            <person name="Yabuta Y."/>
            <person name="Shigeoka S."/>
        </authorList>
    </citation>
    <scope>FUNCTION</scope>
    <scope>INDUCTION BY METHYLVIOLOGEN</scope>
    <scope>GENE FAMILY</scope>
    <scope>NOMENCLATURE</scope>
</reference>
<organism>
    <name type="scientific">Arabidopsis thaliana</name>
    <name type="common">Mouse-ear cress</name>
    <dbReference type="NCBI Taxonomy" id="3702"/>
    <lineage>
        <taxon>Eukaryota</taxon>
        <taxon>Viridiplantae</taxon>
        <taxon>Streptophyta</taxon>
        <taxon>Embryophyta</taxon>
        <taxon>Tracheophyta</taxon>
        <taxon>Spermatophyta</taxon>
        <taxon>Magnoliopsida</taxon>
        <taxon>eudicotyledons</taxon>
        <taxon>Gunneridae</taxon>
        <taxon>Pentapetalae</taxon>
        <taxon>rosids</taxon>
        <taxon>malvids</taxon>
        <taxon>Brassicales</taxon>
        <taxon>Brassicaceae</taxon>
        <taxon>Camelineae</taxon>
        <taxon>Arabidopsis</taxon>
    </lineage>
</organism>
<sequence length="344" mass="39596">MAPGLTQTADAMSTVTITKPSLPSVQDSDRAYVTFLAGNGDYVKGVVGLAKGLRKVKSAYPLVVAMLPDVPEEHRRILVDQGCIVREIEPVYPPENQTQFAMAYYVINYSKLRIWKFVEYSKMIYLDGDIQVYENIDHLFDLPDGYLYAVMDCFCEKTWSHTPQYKIRYCQQCPDKVQWPKAELGEPPALYFNAGMFLYEPNLETYEDLLRTLKITPPTPFAEQDFLNMYFKKIYKPIPLVYNLVLAMLWRHPENVELGKVKVVHYCAAGSKPWRYTGKEANMEREDIKMLVKKWWDIYDDESLDYKKPVTVVDTEVDLVNLKPFITALTEAGRLNYVTAPSAA</sequence>
<evidence type="ECO:0000250" key="1"/>
<evidence type="ECO:0000269" key="2">
    <source>
    </source>
</evidence>
<evidence type="ECO:0000269" key="3">
    <source>
    </source>
</evidence>
<evidence type="ECO:0000269" key="4">
    <source>
    </source>
</evidence>
<evidence type="ECO:0000305" key="5"/>
<name>GOLS1_ARATH</name>
<dbReference type="EC" id="2.4.1.123"/>
<dbReference type="EMBL" id="AB062848">
    <property type="protein sequence ID" value="BAB78530.1"/>
    <property type="molecule type" value="mRNA"/>
</dbReference>
<dbReference type="EMBL" id="AC002337">
    <property type="protein sequence ID" value="AAB63818.1"/>
    <property type="molecule type" value="Genomic_DNA"/>
</dbReference>
<dbReference type="EMBL" id="AC007236">
    <property type="protein sequence ID" value="AAM15468.1"/>
    <property type="molecule type" value="Genomic_DNA"/>
</dbReference>
<dbReference type="EMBL" id="CP002685">
    <property type="protein sequence ID" value="AEC10811.1"/>
    <property type="molecule type" value="Genomic_DNA"/>
</dbReference>
<dbReference type="EMBL" id="AY056139">
    <property type="protein sequence ID" value="AAL07218.1"/>
    <property type="molecule type" value="mRNA"/>
</dbReference>
<dbReference type="EMBL" id="AY091426">
    <property type="protein sequence ID" value="AAM14365.1"/>
    <property type="molecule type" value="mRNA"/>
</dbReference>
<dbReference type="EMBL" id="AY085006">
    <property type="protein sequence ID" value="AAM61564.1"/>
    <property type="molecule type" value="mRNA"/>
</dbReference>
<dbReference type="PIR" id="A84912">
    <property type="entry name" value="A84912"/>
</dbReference>
<dbReference type="RefSeq" id="NP_182240.1">
    <property type="nucleotide sequence ID" value="NM_130286.3"/>
</dbReference>
<dbReference type="SMR" id="O22893"/>
<dbReference type="FunCoup" id="O22893">
    <property type="interactions" value="306"/>
</dbReference>
<dbReference type="STRING" id="3702.O22893"/>
<dbReference type="CAZy" id="GT8">
    <property type="family name" value="Glycosyltransferase Family 8"/>
</dbReference>
<dbReference type="PaxDb" id="3702-AT2G47180.1"/>
<dbReference type="ProteomicsDB" id="248441"/>
<dbReference type="EnsemblPlants" id="AT2G47180.1">
    <property type="protein sequence ID" value="AT2G47180.1"/>
    <property type="gene ID" value="AT2G47180"/>
</dbReference>
<dbReference type="GeneID" id="819331"/>
<dbReference type="Gramene" id="AT2G47180.1">
    <property type="protein sequence ID" value="AT2G47180.1"/>
    <property type="gene ID" value="AT2G47180"/>
</dbReference>
<dbReference type="KEGG" id="ath:AT2G47180"/>
<dbReference type="Araport" id="AT2G47180"/>
<dbReference type="TAIR" id="AT2G47180">
    <property type="gene designation" value="GOLS1"/>
</dbReference>
<dbReference type="eggNOG" id="KOG1950">
    <property type="taxonomic scope" value="Eukaryota"/>
</dbReference>
<dbReference type="HOGENOM" id="CLU_049943_3_0_1"/>
<dbReference type="InParanoid" id="O22893"/>
<dbReference type="OMA" id="WIDAYKS"/>
<dbReference type="OrthoDB" id="2014201at2759"/>
<dbReference type="PhylomeDB" id="O22893"/>
<dbReference type="BRENDA" id="2.4.1.123">
    <property type="organism ID" value="399"/>
</dbReference>
<dbReference type="PRO" id="PR:O22893"/>
<dbReference type="Proteomes" id="UP000006548">
    <property type="component" value="Chromosome 2"/>
</dbReference>
<dbReference type="ExpressionAtlas" id="O22893">
    <property type="expression patterns" value="baseline and differential"/>
</dbReference>
<dbReference type="GO" id="GO:0005737">
    <property type="term" value="C:cytoplasm"/>
    <property type="evidence" value="ECO:0007669"/>
    <property type="project" value="UniProtKB-SubCell"/>
</dbReference>
<dbReference type="GO" id="GO:0047216">
    <property type="term" value="F:inositol 3-alpha-galactosyltransferase activity"/>
    <property type="evidence" value="ECO:0000314"/>
    <property type="project" value="UniProtKB"/>
</dbReference>
<dbReference type="GO" id="GO:0046872">
    <property type="term" value="F:metal ion binding"/>
    <property type="evidence" value="ECO:0007669"/>
    <property type="project" value="UniProtKB-KW"/>
</dbReference>
<dbReference type="GO" id="GO:0006012">
    <property type="term" value="P:galactose metabolic process"/>
    <property type="evidence" value="ECO:0000314"/>
    <property type="project" value="TAIR"/>
</dbReference>
<dbReference type="GO" id="GO:0009737">
    <property type="term" value="P:response to abscisic acid"/>
    <property type="evidence" value="ECO:0000270"/>
    <property type="project" value="UniProtKB"/>
</dbReference>
<dbReference type="GO" id="GO:0009409">
    <property type="term" value="P:response to cold"/>
    <property type="evidence" value="ECO:0000315"/>
    <property type="project" value="TAIR"/>
</dbReference>
<dbReference type="GO" id="GO:0009408">
    <property type="term" value="P:response to heat"/>
    <property type="evidence" value="ECO:0000270"/>
    <property type="project" value="UniProtKB"/>
</dbReference>
<dbReference type="GO" id="GO:0006979">
    <property type="term" value="P:response to oxidative stress"/>
    <property type="evidence" value="ECO:0000270"/>
    <property type="project" value="TAIR"/>
</dbReference>
<dbReference type="GO" id="GO:0009651">
    <property type="term" value="P:response to salt stress"/>
    <property type="evidence" value="ECO:0000315"/>
    <property type="project" value="TAIR"/>
</dbReference>
<dbReference type="GO" id="GO:0009414">
    <property type="term" value="P:response to water deprivation"/>
    <property type="evidence" value="ECO:0000270"/>
    <property type="project" value="UniProtKB"/>
</dbReference>
<dbReference type="CDD" id="cd02537">
    <property type="entry name" value="GT8_Glycogenin"/>
    <property type="match status" value="1"/>
</dbReference>
<dbReference type="FunFam" id="3.90.550.10:FF:000049">
    <property type="entry name" value="Hexosyltransferase"/>
    <property type="match status" value="1"/>
</dbReference>
<dbReference type="Gene3D" id="3.90.550.10">
    <property type="entry name" value="Spore Coat Polysaccharide Biosynthesis Protein SpsA, Chain A"/>
    <property type="match status" value="1"/>
</dbReference>
<dbReference type="InterPro" id="IPR002495">
    <property type="entry name" value="Glyco_trans_8"/>
</dbReference>
<dbReference type="InterPro" id="IPR050587">
    <property type="entry name" value="GNT1/Glycosyltrans_8"/>
</dbReference>
<dbReference type="InterPro" id="IPR029044">
    <property type="entry name" value="Nucleotide-diphossugar_trans"/>
</dbReference>
<dbReference type="PANTHER" id="PTHR11183">
    <property type="entry name" value="GLYCOGENIN SUBFAMILY MEMBER"/>
    <property type="match status" value="1"/>
</dbReference>
<dbReference type="Pfam" id="PF01501">
    <property type="entry name" value="Glyco_transf_8"/>
    <property type="match status" value="1"/>
</dbReference>
<dbReference type="SUPFAM" id="SSF53448">
    <property type="entry name" value="Nucleotide-diphospho-sugar transferases"/>
    <property type="match status" value="1"/>
</dbReference>
<keyword id="KW-0119">Carbohydrate metabolism</keyword>
<keyword id="KW-0963">Cytoplasm</keyword>
<keyword id="KW-0299">Galactose metabolism</keyword>
<keyword id="KW-0328">Glycosyltransferase</keyword>
<keyword id="KW-0464">Manganese</keyword>
<keyword id="KW-0479">Metal-binding</keyword>
<keyword id="KW-1185">Reference proteome</keyword>
<keyword id="KW-0808">Transferase</keyword>
<feature type="chain" id="PRO_0000418657" description="Galactinol synthase 1">
    <location>
        <begin position="1"/>
        <end position="344"/>
    </location>
</feature>
<feature type="active site" evidence="1">
    <location>
        <position position="111"/>
    </location>
</feature>
<feature type="binding site" evidence="1">
    <location>
        <position position="127"/>
    </location>
    <ligand>
        <name>Mn(2+)</name>
        <dbReference type="ChEBI" id="CHEBI:29035"/>
    </ligand>
</feature>
<feature type="binding site" evidence="1">
    <location>
        <position position="129"/>
    </location>
    <ligand>
        <name>Mn(2+)</name>
        <dbReference type="ChEBI" id="CHEBI:29035"/>
    </ligand>
</feature>
<feature type="binding site" evidence="1">
    <location>
        <position position="265"/>
    </location>
    <ligand>
        <name>Mn(2+)</name>
        <dbReference type="ChEBI" id="CHEBI:29035"/>
    </ligand>
</feature>
<protein>
    <recommendedName>
        <fullName>Galactinol synthase 1</fullName>
        <shortName>AtGolS1</shortName>
        <shortName>GolS-1</shortName>
        <ecNumber>2.4.1.123</ecNumber>
    </recommendedName>
</protein>
<proteinExistence type="evidence at protein level"/>